<reference key="1">
    <citation type="journal article" date="2005" name="Nucleic Acids Res.">
        <title>The genome sequence of Xanthomonas oryzae pathovar oryzae KACC10331, the bacterial blight pathogen of rice.</title>
        <authorList>
            <person name="Lee B.-M."/>
            <person name="Park Y.-J."/>
            <person name="Park D.-S."/>
            <person name="Kang H.-W."/>
            <person name="Kim J.-G."/>
            <person name="Song E.-S."/>
            <person name="Park I.-C."/>
            <person name="Yoon U.-H."/>
            <person name="Hahn J.-H."/>
            <person name="Koo B.-S."/>
            <person name="Lee G.-B."/>
            <person name="Kim H."/>
            <person name="Park H.-S."/>
            <person name="Yoon K.-O."/>
            <person name="Kim J.-H."/>
            <person name="Jung C.-H."/>
            <person name="Koh N.-H."/>
            <person name="Seo J.-S."/>
            <person name="Go S.-J."/>
        </authorList>
    </citation>
    <scope>NUCLEOTIDE SEQUENCE [LARGE SCALE GENOMIC DNA]</scope>
    <source>
        <strain>KACC10331 / KXO85</strain>
    </source>
</reference>
<comment type="subcellular location">
    <subcellularLocation>
        <location evidence="1">Cell inner membrane</location>
        <topology evidence="1">Multi-pass membrane protein</topology>
    </subcellularLocation>
</comment>
<comment type="similarity">
    <text evidence="1">Belongs to the UPF0761 family.</text>
</comment>
<gene>
    <name type="ordered locus">XOO3615</name>
</gene>
<evidence type="ECO:0000255" key="1">
    <source>
        <dbReference type="HAMAP-Rule" id="MF_00672"/>
    </source>
</evidence>
<feature type="chain" id="PRO_0000201006" description="UPF0761 membrane protein XOO3615">
    <location>
        <begin position="1"/>
        <end position="425"/>
    </location>
</feature>
<feature type="transmembrane region" description="Helical" evidence="1">
    <location>
        <begin position="48"/>
        <end position="68"/>
    </location>
</feature>
<feature type="transmembrane region" description="Helical" evidence="1">
    <location>
        <begin position="105"/>
        <end position="125"/>
    </location>
</feature>
<feature type="transmembrane region" description="Helical" evidence="1">
    <location>
        <begin position="154"/>
        <end position="174"/>
    </location>
</feature>
<feature type="transmembrane region" description="Helical" evidence="1">
    <location>
        <begin position="182"/>
        <end position="202"/>
    </location>
</feature>
<feature type="transmembrane region" description="Helical" evidence="1">
    <location>
        <begin position="219"/>
        <end position="239"/>
    </location>
</feature>
<feature type="transmembrane region" description="Helical" evidence="1">
    <location>
        <begin position="250"/>
        <end position="270"/>
    </location>
</feature>
<dbReference type="EMBL" id="AE013598">
    <property type="protein sequence ID" value="AAW76869.1"/>
    <property type="molecule type" value="Genomic_DNA"/>
</dbReference>
<dbReference type="SMR" id="Q5GWQ2"/>
<dbReference type="STRING" id="291331.XOO3615"/>
<dbReference type="KEGG" id="xoo:XOO3615"/>
<dbReference type="HOGENOM" id="CLU_032288_1_0_6"/>
<dbReference type="Proteomes" id="UP000006735">
    <property type="component" value="Chromosome"/>
</dbReference>
<dbReference type="GO" id="GO:0005886">
    <property type="term" value="C:plasma membrane"/>
    <property type="evidence" value="ECO:0007669"/>
    <property type="project" value="UniProtKB-SubCell"/>
</dbReference>
<dbReference type="HAMAP" id="MF_00672">
    <property type="entry name" value="UPF0761"/>
    <property type="match status" value="1"/>
</dbReference>
<dbReference type="InterPro" id="IPR023679">
    <property type="entry name" value="UPF0761_bac"/>
</dbReference>
<dbReference type="InterPro" id="IPR017039">
    <property type="entry name" value="Virul_fac_BrkB"/>
</dbReference>
<dbReference type="NCBIfam" id="NF003256">
    <property type="entry name" value="PRK04214.1"/>
    <property type="match status" value="1"/>
</dbReference>
<dbReference type="NCBIfam" id="TIGR00765">
    <property type="entry name" value="yihY_not_rbn"/>
    <property type="match status" value="1"/>
</dbReference>
<dbReference type="PANTHER" id="PTHR30213">
    <property type="entry name" value="INNER MEMBRANE PROTEIN YHJD"/>
    <property type="match status" value="1"/>
</dbReference>
<dbReference type="PANTHER" id="PTHR30213:SF0">
    <property type="entry name" value="UPF0761 MEMBRANE PROTEIN YIHY"/>
    <property type="match status" value="1"/>
</dbReference>
<dbReference type="Pfam" id="PF03631">
    <property type="entry name" value="Virul_fac_BrkB"/>
    <property type="match status" value="1"/>
</dbReference>
<keyword id="KW-0997">Cell inner membrane</keyword>
<keyword id="KW-1003">Cell membrane</keyword>
<keyword id="KW-0472">Membrane</keyword>
<keyword id="KW-1185">Reference proteome</keyword>
<keyword id="KW-0812">Transmembrane</keyword>
<keyword id="KW-1133">Transmembrane helix</keyword>
<proteinExistence type="inferred from homology"/>
<name>Y3615_XANOR</name>
<accession>Q5GWQ2</accession>
<sequence length="425" mass="48303">MSRVKKLHQWKERLRDRARTVSFGRFLWRRFLDDRLFQAAASLAYTTVFALVPLAIVVFGVLSAFPAFNEWKDALTDFIFTNFVPGAARSVQNYLNRSLEDLGKFTVAGMVALVASLLITLHSIEQTFNSIWRVAAARPKVTRFLIYWTVLTLGTMLAAASMAMAAYVFALPLFRTTEGQWLAEFAWRLAPMAVEFICIVLIYRVVPQHVVRLRHALPGALLAVILMEIVKWGFGVYLGNFQTYQRIYGALSALPILLLWIYLSWVSVLLGASLASSMAAFRYQPEAMRLPTGFEIYGLLRLLGRFRQARIHGEGLDEDRILALEPMLTDTLMQELLCELKRMRLLRRDERGQWLLARDLDLVPLAELYENCQLRVPIEDRPLPCRDDAYGQAAAAALEQLRQPLRSVLAQPVGDLYTHLPGDPP</sequence>
<organism>
    <name type="scientific">Xanthomonas oryzae pv. oryzae (strain KACC10331 / KXO85)</name>
    <dbReference type="NCBI Taxonomy" id="291331"/>
    <lineage>
        <taxon>Bacteria</taxon>
        <taxon>Pseudomonadati</taxon>
        <taxon>Pseudomonadota</taxon>
        <taxon>Gammaproteobacteria</taxon>
        <taxon>Lysobacterales</taxon>
        <taxon>Lysobacteraceae</taxon>
        <taxon>Xanthomonas</taxon>
    </lineage>
</organism>
<protein>
    <recommendedName>
        <fullName evidence="1">UPF0761 membrane protein XOO3615</fullName>
    </recommendedName>
</protein>